<reference key="1">
    <citation type="journal article" date="2006" name="Lancet">
        <title>Complete genome sequence of USA300, an epidemic clone of community-acquired meticillin-resistant Staphylococcus aureus.</title>
        <authorList>
            <person name="Diep B.A."/>
            <person name="Gill S.R."/>
            <person name="Chang R.F."/>
            <person name="Phan T.H."/>
            <person name="Chen J.H."/>
            <person name="Davidson M.G."/>
            <person name="Lin F."/>
            <person name="Lin J."/>
            <person name="Carleton H.A."/>
            <person name="Mongodin E.F."/>
            <person name="Sensabaugh G.F."/>
            <person name="Perdreau-Remington F."/>
        </authorList>
    </citation>
    <scope>NUCLEOTIDE SEQUENCE [LARGE SCALE GENOMIC DNA]</scope>
    <source>
        <strain>USA300</strain>
    </source>
</reference>
<protein>
    <recommendedName>
        <fullName evidence="1">RNA-binding protein SAUSA300_0529</fullName>
    </recommendedName>
    <alternativeName>
        <fullName evidence="2">Putative ribosomal protein L7Ae-like</fullName>
    </alternativeName>
    <alternativeName>
        <fullName evidence="1">Ribosomal protein eL8-like</fullName>
    </alternativeName>
</protein>
<organism>
    <name type="scientific">Staphylococcus aureus (strain USA300)</name>
    <dbReference type="NCBI Taxonomy" id="367830"/>
    <lineage>
        <taxon>Bacteria</taxon>
        <taxon>Bacillati</taxon>
        <taxon>Bacillota</taxon>
        <taxon>Bacilli</taxon>
        <taxon>Bacillales</taxon>
        <taxon>Staphylococcaceae</taxon>
        <taxon>Staphylococcus</taxon>
    </lineage>
</organism>
<feature type="chain" id="PRO_1000025044" description="RNA-binding protein SAUSA300_0529">
    <location>
        <begin position="1"/>
        <end position="84"/>
    </location>
</feature>
<keyword id="KW-0694">RNA-binding</keyword>
<dbReference type="EMBL" id="CP000255">
    <property type="protein sequence ID" value="ABD21695.1"/>
    <property type="molecule type" value="Genomic_DNA"/>
</dbReference>
<dbReference type="RefSeq" id="WP_000031892.1">
    <property type="nucleotide sequence ID" value="NZ_CP027476.1"/>
</dbReference>
<dbReference type="SMR" id="Q2FJ96"/>
<dbReference type="KEGG" id="saa:SAUSA300_0529"/>
<dbReference type="HOGENOM" id="CLU_168063_0_0_9"/>
<dbReference type="Proteomes" id="UP000001939">
    <property type="component" value="Chromosome"/>
</dbReference>
<dbReference type="GO" id="GO:0003723">
    <property type="term" value="F:RNA binding"/>
    <property type="evidence" value="ECO:0007669"/>
    <property type="project" value="UniProtKB-UniRule"/>
</dbReference>
<dbReference type="Gene3D" id="3.30.1330.30">
    <property type="match status" value="1"/>
</dbReference>
<dbReference type="HAMAP" id="MF_00574">
    <property type="entry name" value="Ribosomal_eL8_Bact"/>
    <property type="match status" value="1"/>
</dbReference>
<dbReference type="InterPro" id="IPR029064">
    <property type="entry name" value="Ribosomal_eL30-like_sf"/>
</dbReference>
<dbReference type="InterPro" id="IPR004038">
    <property type="entry name" value="Ribosomal_eL8/eL30/eS12/Gad45"/>
</dbReference>
<dbReference type="InterPro" id="IPR023460">
    <property type="entry name" value="RNA_bf_YbxF-like"/>
</dbReference>
<dbReference type="NCBIfam" id="NF010123">
    <property type="entry name" value="PRK13600.1"/>
    <property type="match status" value="1"/>
</dbReference>
<dbReference type="Pfam" id="PF01248">
    <property type="entry name" value="Ribosomal_L7Ae"/>
    <property type="match status" value="1"/>
</dbReference>
<dbReference type="SUPFAM" id="SSF55315">
    <property type="entry name" value="L30e-like"/>
    <property type="match status" value="1"/>
</dbReference>
<gene>
    <name type="ordered locus">SAUSA300_0529</name>
</gene>
<evidence type="ECO:0000255" key="1">
    <source>
        <dbReference type="HAMAP-Rule" id="MF_00574"/>
    </source>
</evidence>
<evidence type="ECO:0000305" key="2"/>
<proteinExistence type="inferred from homology"/>
<sequence length="84" mass="9446">MSKEKVARFNKQHFVVGLKETLKALKKDQVTSLIIAEDVEVYLMTRVLSQINQKNIPVSFFKSKHALGKHVGINVNATIVALIK</sequence>
<name>RXL7_STAA3</name>
<accession>Q2FJ96</accession>
<comment type="similarity">
    <text evidence="1">Belongs to the eukaryotic ribosomal protein eL8 family.</text>
</comment>